<comment type="function">
    <text evidence="1">This protein is involved in the repair of mismatches in DNA. It is required for dam-dependent methyl-directed DNA mismatch repair. May act as a 'molecular matchmaker', a protein that promotes the formation of a stable complex between two or more DNA-binding proteins in an ATP-dependent manner without itself being part of a final effector complex.</text>
</comment>
<comment type="similarity">
    <text evidence="1">Belongs to the DNA mismatch repair MutL/HexB family.</text>
</comment>
<accession>C3L823</accession>
<organism>
    <name type="scientific">Bacillus anthracis (strain CDC 684 / NRRL 3495)</name>
    <dbReference type="NCBI Taxonomy" id="568206"/>
    <lineage>
        <taxon>Bacteria</taxon>
        <taxon>Bacillati</taxon>
        <taxon>Bacillota</taxon>
        <taxon>Bacilli</taxon>
        <taxon>Bacillales</taxon>
        <taxon>Bacillaceae</taxon>
        <taxon>Bacillus</taxon>
        <taxon>Bacillus cereus group</taxon>
    </lineage>
</organism>
<proteinExistence type="inferred from homology"/>
<gene>
    <name evidence="1" type="primary">mutL</name>
    <name type="ordered locus">BAMEG_0727</name>
</gene>
<dbReference type="EMBL" id="CP001215">
    <property type="protein sequence ID" value="ACP16973.1"/>
    <property type="molecule type" value="Genomic_DNA"/>
</dbReference>
<dbReference type="RefSeq" id="WP_000516478.1">
    <property type="nucleotide sequence ID" value="NC_012581.1"/>
</dbReference>
<dbReference type="SMR" id="C3L823"/>
<dbReference type="GeneID" id="45023597"/>
<dbReference type="KEGG" id="bah:BAMEG_0727"/>
<dbReference type="HOGENOM" id="CLU_004131_4_1_9"/>
<dbReference type="GO" id="GO:0032300">
    <property type="term" value="C:mismatch repair complex"/>
    <property type="evidence" value="ECO:0007669"/>
    <property type="project" value="InterPro"/>
</dbReference>
<dbReference type="GO" id="GO:0005524">
    <property type="term" value="F:ATP binding"/>
    <property type="evidence" value="ECO:0007669"/>
    <property type="project" value="InterPro"/>
</dbReference>
<dbReference type="GO" id="GO:0016887">
    <property type="term" value="F:ATP hydrolysis activity"/>
    <property type="evidence" value="ECO:0007669"/>
    <property type="project" value="InterPro"/>
</dbReference>
<dbReference type="GO" id="GO:0140664">
    <property type="term" value="F:ATP-dependent DNA damage sensor activity"/>
    <property type="evidence" value="ECO:0007669"/>
    <property type="project" value="InterPro"/>
</dbReference>
<dbReference type="GO" id="GO:0030983">
    <property type="term" value="F:mismatched DNA binding"/>
    <property type="evidence" value="ECO:0007669"/>
    <property type="project" value="InterPro"/>
</dbReference>
<dbReference type="GO" id="GO:0006298">
    <property type="term" value="P:mismatch repair"/>
    <property type="evidence" value="ECO:0007669"/>
    <property type="project" value="UniProtKB-UniRule"/>
</dbReference>
<dbReference type="CDD" id="cd16926">
    <property type="entry name" value="HATPase_MutL-MLH-PMS-like"/>
    <property type="match status" value="1"/>
</dbReference>
<dbReference type="CDD" id="cd00782">
    <property type="entry name" value="MutL_Trans"/>
    <property type="match status" value="1"/>
</dbReference>
<dbReference type="FunFam" id="3.30.1370.100:FF:000004">
    <property type="entry name" value="DNA mismatch repair endonuclease MutL"/>
    <property type="match status" value="1"/>
</dbReference>
<dbReference type="FunFam" id="3.30.230.10:FF:000036">
    <property type="entry name" value="DNA mismatch repair endonuclease MutL"/>
    <property type="match status" value="1"/>
</dbReference>
<dbReference type="FunFam" id="3.30.565.10:FF:000003">
    <property type="entry name" value="DNA mismatch repair endonuclease MutL"/>
    <property type="match status" value="1"/>
</dbReference>
<dbReference type="Gene3D" id="3.30.230.10">
    <property type="match status" value="1"/>
</dbReference>
<dbReference type="Gene3D" id="3.30.565.10">
    <property type="entry name" value="Histidine kinase-like ATPase, C-terminal domain"/>
    <property type="match status" value="1"/>
</dbReference>
<dbReference type="Gene3D" id="3.30.1540.20">
    <property type="entry name" value="MutL, C-terminal domain, dimerisation subdomain"/>
    <property type="match status" value="1"/>
</dbReference>
<dbReference type="Gene3D" id="3.30.1370.100">
    <property type="entry name" value="MutL, C-terminal domain, regulatory subdomain"/>
    <property type="match status" value="1"/>
</dbReference>
<dbReference type="HAMAP" id="MF_00149">
    <property type="entry name" value="DNA_mis_repair"/>
    <property type="match status" value="1"/>
</dbReference>
<dbReference type="InterPro" id="IPR014762">
    <property type="entry name" value="DNA_mismatch_repair_CS"/>
</dbReference>
<dbReference type="InterPro" id="IPR020667">
    <property type="entry name" value="DNA_mismatch_repair_MutL"/>
</dbReference>
<dbReference type="InterPro" id="IPR013507">
    <property type="entry name" value="DNA_mismatch_S5_2-like"/>
</dbReference>
<dbReference type="InterPro" id="IPR036890">
    <property type="entry name" value="HATPase_C_sf"/>
</dbReference>
<dbReference type="InterPro" id="IPR002099">
    <property type="entry name" value="MutL/Mlh/PMS"/>
</dbReference>
<dbReference type="InterPro" id="IPR038973">
    <property type="entry name" value="MutL/Mlh/Pms-like"/>
</dbReference>
<dbReference type="InterPro" id="IPR014790">
    <property type="entry name" value="MutL_C"/>
</dbReference>
<dbReference type="InterPro" id="IPR042120">
    <property type="entry name" value="MutL_C_dimsub"/>
</dbReference>
<dbReference type="InterPro" id="IPR042121">
    <property type="entry name" value="MutL_C_regsub"/>
</dbReference>
<dbReference type="InterPro" id="IPR037198">
    <property type="entry name" value="MutL_C_sf"/>
</dbReference>
<dbReference type="InterPro" id="IPR020568">
    <property type="entry name" value="Ribosomal_Su5_D2-typ_SF"/>
</dbReference>
<dbReference type="InterPro" id="IPR014721">
    <property type="entry name" value="Ribsml_uS5_D2-typ_fold_subgr"/>
</dbReference>
<dbReference type="NCBIfam" id="TIGR00585">
    <property type="entry name" value="mutl"/>
    <property type="match status" value="1"/>
</dbReference>
<dbReference type="NCBIfam" id="NF000950">
    <property type="entry name" value="PRK00095.1-3"/>
    <property type="match status" value="1"/>
</dbReference>
<dbReference type="PANTHER" id="PTHR10073">
    <property type="entry name" value="DNA MISMATCH REPAIR PROTEIN MLH, PMS, MUTL"/>
    <property type="match status" value="1"/>
</dbReference>
<dbReference type="PANTHER" id="PTHR10073:SF12">
    <property type="entry name" value="DNA MISMATCH REPAIR PROTEIN MLH1"/>
    <property type="match status" value="1"/>
</dbReference>
<dbReference type="Pfam" id="PF01119">
    <property type="entry name" value="DNA_mis_repair"/>
    <property type="match status" value="1"/>
</dbReference>
<dbReference type="Pfam" id="PF13589">
    <property type="entry name" value="HATPase_c_3"/>
    <property type="match status" value="1"/>
</dbReference>
<dbReference type="Pfam" id="PF08676">
    <property type="entry name" value="MutL_C"/>
    <property type="match status" value="1"/>
</dbReference>
<dbReference type="SMART" id="SM01340">
    <property type="entry name" value="DNA_mis_repair"/>
    <property type="match status" value="1"/>
</dbReference>
<dbReference type="SMART" id="SM00853">
    <property type="entry name" value="MutL_C"/>
    <property type="match status" value="1"/>
</dbReference>
<dbReference type="SUPFAM" id="SSF55874">
    <property type="entry name" value="ATPase domain of HSP90 chaperone/DNA topoisomerase II/histidine kinase"/>
    <property type="match status" value="1"/>
</dbReference>
<dbReference type="SUPFAM" id="SSF118116">
    <property type="entry name" value="DNA mismatch repair protein MutL"/>
    <property type="match status" value="1"/>
</dbReference>
<dbReference type="SUPFAM" id="SSF54211">
    <property type="entry name" value="Ribosomal protein S5 domain 2-like"/>
    <property type="match status" value="1"/>
</dbReference>
<dbReference type="PROSITE" id="PS00058">
    <property type="entry name" value="DNA_MISMATCH_REPAIR_1"/>
    <property type="match status" value="1"/>
</dbReference>
<feature type="chain" id="PRO_1000192155" description="DNA mismatch repair protein MutL">
    <location>
        <begin position="1"/>
        <end position="626"/>
    </location>
</feature>
<feature type="region of interest" description="Disordered" evidence="2">
    <location>
        <begin position="377"/>
        <end position="413"/>
    </location>
</feature>
<feature type="compositionally biased region" description="Polar residues" evidence="2">
    <location>
        <begin position="383"/>
        <end position="393"/>
    </location>
</feature>
<protein>
    <recommendedName>
        <fullName evidence="1">DNA mismatch repair protein MutL</fullName>
    </recommendedName>
</protein>
<name>MUTL_BACAC</name>
<evidence type="ECO:0000255" key="1">
    <source>
        <dbReference type="HAMAP-Rule" id="MF_00149"/>
    </source>
</evidence>
<evidence type="ECO:0000256" key="2">
    <source>
        <dbReference type="SAM" id="MobiDB-lite"/>
    </source>
</evidence>
<reference key="1">
    <citation type="submission" date="2008-10" db="EMBL/GenBank/DDBJ databases">
        <title>Genome sequence of Bacillus anthracis str. CDC 684.</title>
        <authorList>
            <person name="Dodson R.J."/>
            <person name="Munk A.C."/>
            <person name="Brettin T."/>
            <person name="Bruce D."/>
            <person name="Detter C."/>
            <person name="Tapia R."/>
            <person name="Han C."/>
            <person name="Sutton G."/>
            <person name="Sims D."/>
        </authorList>
    </citation>
    <scope>NUCLEOTIDE SEQUENCE [LARGE SCALE GENOMIC DNA]</scope>
    <source>
        <strain>CDC 684 / NRRL 3495</strain>
    </source>
</reference>
<sequence length="626" mass="71456">MGKIRKLDDQLSNLIAAGEVVERPASVVKELVENSIDANSTSIEIHLEEAGLSKIRIIDNGDGIAEEDCIVAFERHATSKIKDENDLFRIRTLGFRGEALPSIASVSELELITSTGDAPGTHLIIKGGDIIKQEKTASRKGTDITVQNLFFNTPARLKYMKTIHTELGNITDIVYRIAMSHPEVSLKLFHNEKKLLHTSGNGDVRQVLASIYSIQVAKKLVPIEAESLDFTIKGYVTLPEVTRASRNYMSTIVNGRYVRNFVLMKAIQQGYHTLLPVGRYPIGFLSIEMDPMLVDVNVHPAKLEVRFSKEQELLKLIEETLQAAFKKIQLIPDAGVTTKKKEKDESVQEQFQFEHAKPKEPSMPEIVLPTGMDEKQEEPQAVKQPTQLWQPSTKPIIEEPIQEEKSWDSNEEGFELEELEEVREIKEIEMNGNDLPPLYPIGQMHGTYIFAQNDKGLYMIDQHAAQERINYEYFRDKVGRVAQEVQELLVPYRIDLSLTEFLRVEEQLEELKKVGLFLEQFGHQSFIVRSHPTWFPKGQETEIIDEMMEQVVKLKKVDIKKLREEAAIMMSCKASIKANQYLTNDQIFALLEELRTTTNPYTCPHGRPILVHHSTYELEKMFKRVM</sequence>
<keyword id="KW-0227">DNA damage</keyword>
<keyword id="KW-0234">DNA repair</keyword>